<name>RS15_TRIL1</name>
<sequence length="88" mass="10493">MLATEKKQEIINNFKKHEGDTGSPEVQIAILTARIVYLTDHFKIHKKDHHSRRGLLKLVGQRRRMLDYLKSRDLDRYKKVIEQLGIRR</sequence>
<dbReference type="EMBL" id="CP001089">
    <property type="protein sequence ID" value="ACD95389.1"/>
    <property type="molecule type" value="Genomic_DNA"/>
</dbReference>
<dbReference type="RefSeq" id="WP_012469731.1">
    <property type="nucleotide sequence ID" value="NC_010814.1"/>
</dbReference>
<dbReference type="SMR" id="B3EAF1"/>
<dbReference type="STRING" id="398767.Glov_1673"/>
<dbReference type="KEGG" id="glo:Glov_1673"/>
<dbReference type="eggNOG" id="COG0184">
    <property type="taxonomic scope" value="Bacteria"/>
</dbReference>
<dbReference type="HOGENOM" id="CLU_148518_0_0_7"/>
<dbReference type="OrthoDB" id="9799262at2"/>
<dbReference type="Proteomes" id="UP000002420">
    <property type="component" value="Chromosome"/>
</dbReference>
<dbReference type="GO" id="GO:0022627">
    <property type="term" value="C:cytosolic small ribosomal subunit"/>
    <property type="evidence" value="ECO:0007669"/>
    <property type="project" value="TreeGrafter"/>
</dbReference>
<dbReference type="GO" id="GO:0019843">
    <property type="term" value="F:rRNA binding"/>
    <property type="evidence" value="ECO:0007669"/>
    <property type="project" value="UniProtKB-UniRule"/>
</dbReference>
<dbReference type="GO" id="GO:0003735">
    <property type="term" value="F:structural constituent of ribosome"/>
    <property type="evidence" value="ECO:0007669"/>
    <property type="project" value="InterPro"/>
</dbReference>
<dbReference type="GO" id="GO:0006412">
    <property type="term" value="P:translation"/>
    <property type="evidence" value="ECO:0007669"/>
    <property type="project" value="UniProtKB-UniRule"/>
</dbReference>
<dbReference type="CDD" id="cd00353">
    <property type="entry name" value="Ribosomal_S15p_S13e"/>
    <property type="match status" value="1"/>
</dbReference>
<dbReference type="FunFam" id="1.10.287.10:FF:000002">
    <property type="entry name" value="30S ribosomal protein S15"/>
    <property type="match status" value="1"/>
</dbReference>
<dbReference type="Gene3D" id="6.10.250.3130">
    <property type="match status" value="1"/>
</dbReference>
<dbReference type="Gene3D" id="1.10.287.10">
    <property type="entry name" value="S15/NS1, RNA-binding"/>
    <property type="match status" value="1"/>
</dbReference>
<dbReference type="HAMAP" id="MF_01343_B">
    <property type="entry name" value="Ribosomal_uS15_B"/>
    <property type="match status" value="1"/>
</dbReference>
<dbReference type="InterPro" id="IPR000589">
    <property type="entry name" value="Ribosomal_uS15"/>
</dbReference>
<dbReference type="InterPro" id="IPR005290">
    <property type="entry name" value="Ribosomal_uS15_bac-type"/>
</dbReference>
<dbReference type="InterPro" id="IPR009068">
    <property type="entry name" value="uS15_NS1_RNA-bd_sf"/>
</dbReference>
<dbReference type="NCBIfam" id="TIGR00952">
    <property type="entry name" value="S15_bact"/>
    <property type="match status" value="1"/>
</dbReference>
<dbReference type="PANTHER" id="PTHR23321">
    <property type="entry name" value="RIBOSOMAL PROTEIN S15, BACTERIAL AND ORGANELLAR"/>
    <property type="match status" value="1"/>
</dbReference>
<dbReference type="PANTHER" id="PTHR23321:SF26">
    <property type="entry name" value="SMALL RIBOSOMAL SUBUNIT PROTEIN US15M"/>
    <property type="match status" value="1"/>
</dbReference>
<dbReference type="Pfam" id="PF00312">
    <property type="entry name" value="Ribosomal_S15"/>
    <property type="match status" value="1"/>
</dbReference>
<dbReference type="SMART" id="SM01387">
    <property type="entry name" value="Ribosomal_S15"/>
    <property type="match status" value="1"/>
</dbReference>
<dbReference type="SUPFAM" id="SSF47060">
    <property type="entry name" value="S15/NS1 RNA-binding domain"/>
    <property type="match status" value="1"/>
</dbReference>
<dbReference type="PROSITE" id="PS00362">
    <property type="entry name" value="RIBOSOMAL_S15"/>
    <property type="match status" value="1"/>
</dbReference>
<proteinExistence type="inferred from homology"/>
<gene>
    <name evidence="1" type="primary">rpsO</name>
    <name type="ordered locus">Glov_1673</name>
</gene>
<protein>
    <recommendedName>
        <fullName evidence="1">Small ribosomal subunit protein uS15</fullName>
    </recommendedName>
    <alternativeName>
        <fullName evidence="2">30S ribosomal protein S15</fullName>
    </alternativeName>
</protein>
<feature type="chain" id="PRO_1000143122" description="Small ribosomal subunit protein uS15">
    <location>
        <begin position="1"/>
        <end position="88"/>
    </location>
</feature>
<keyword id="KW-1185">Reference proteome</keyword>
<keyword id="KW-0687">Ribonucleoprotein</keyword>
<keyword id="KW-0689">Ribosomal protein</keyword>
<keyword id="KW-0694">RNA-binding</keyword>
<keyword id="KW-0699">rRNA-binding</keyword>
<evidence type="ECO:0000255" key="1">
    <source>
        <dbReference type="HAMAP-Rule" id="MF_01343"/>
    </source>
</evidence>
<evidence type="ECO:0000305" key="2"/>
<accession>B3EAF1</accession>
<reference key="1">
    <citation type="submission" date="2008-05" db="EMBL/GenBank/DDBJ databases">
        <title>Complete sequence of chromosome of Geobacter lovleyi SZ.</title>
        <authorList>
            <consortium name="US DOE Joint Genome Institute"/>
            <person name="Lucas S."/>
            <person name="Copeland A."/>
            <person name="Lapidus A."/>
            <person name="Glavina del Rio T."/>
            <person name="Dalin E."/>
            <person name="Tice H."/>
            <person name="Bruce D."/>
            <person name="Goodwin L."/>
            <person name="Pitluck S."/>
            <person name="Chertkov O."/>
            <person name="Meincke L."/>
            <person name="Brettin T."/>
            <person name="Detter J.C."/>
            <person name="Han C."/>
            <person name="Tapia R."/>
            <person name="Kuske C.R."/>
            <person name="Schmutz J."/>
            <person name="Larimer F."/>
            <person name="Land M."/>
            <person name="Hauser L."/>
            <person name="Kyrpides N."/>
            <person name="Mikhailova N."/>
            <person name="Sung Y."/>
            <person name="Fletcher K.E."/>
            <person name="Ritalahti K.M."/>
            <person name="Loeffler F.E."/>
            <person name="Richardson P."/>
        </authorList>
    </citation>
    <scope>NUCLEOTIDE SEQUENCE [LARGE SCALE GENOMIC DNA]</scope>
    <source>
        <strain>ATCC BAA-1151 / DSM 17278 / SZ</strain>
    </source>
</reference>
<organism>
    <name type="scientific">Trichlorobacter lovleyi (strain ATCC BAA-1151 / DSM 17278 / SZ)</name>
    <name type="common">Geobacter lovleyi</name>
    <dbReference type="NCBI Taxonomy" id="398767"/>
    <lineage>
        <taxon>Bacteria</taxon>
        <taxon>Pseudomonadati</taxon>
        <taxon>Thermodesulfobacteriota</taxon>
        <taxon>Desulfuromonadia</taxon>
        <taxon>Geobacterales</taxon>
        <taxon>Geobacteraceae</taxon>
        <taxon>Trichlorobacter</taxon>
    </lineage>
</organism>
<comment type="function">
    <text evidence="1">One of the primary rRNA binding proteins, it binds directly to 16S rRNA where it helps nucleate assembly of the platform of the 30S subunit by binding and bridging several RNA helices of the 16S rRNA.</text>
</comment>
<comment type="function">
    <text evidence="1">Forms an intersubunit bridge (bridge B4) with the 23S rRNA of the 50S subunit in the ribosome.</text>
</comment>
<comment type="subunit">
    <text evidence="1">Part of the 30S ribosomal subunit. Forms a bridge to the 50S subunit in the 70S ribosome, contacting the 23S rRNA.</text>
</comment>
<comment type="similarity">
    <text evidence="1">Belongs to the universal ribosomal protein uS15 family.</text>
</comment>